<name>CH60_BACAN</name>
<dbReference type="EC" id="5.6.1.7" evidence="1"/>
<dbReference type="EMBL" id="AE016879">
    <property type="protein sequence ID" value="AAP24306.1"/>
    <property type="molecule type" value="Genomic_DNA"/>
</dbReference>
<dbReference type="EMBL" id="AE017334">
    <property type="protein sequence ID" value="AAT29351.1"/>
    <property type="molecule type" value="Genomic_DNA"/>
</dbReference>
<dbReference type="EMBL" id="AE017225">
    <property type="protein sequence ID" value="AAT52588.1"/>
    <property type="molecule type" value="Genomic_DNA"/>
</dbReference>
<dbReference type="RefSeq" id="NP_842820.1">
    <property type="nucleotide sequence ID" value="NC_003997.3"/>
</dbReference>
<dbReference type="RefSeq" id="WP_001030000.1">
    <property type="nucleotide sequence ID" value="NZ_WXXJ01000053.1"/>
</dbReference>
<dbReference type="RefSeq" id="YP_026537.1">
    <property type="nucleotide sequence ID" value="NC_005945.1"/>
</dbReference>
<dbReference type="SMR" id="Q81VE1"/>
<dbReference type="IntAct" id="Q81VE1">
    <property type="interactions" value="4"/>
</dbReference>
<dbReference type="STRING" id="261594.GBAA_0267"/>
<dbReference type="DNASU" id="1086282"/>
<dbReference type="GeneID" id="45020321"/>
<dbReference type="KEGG" id="ban:BA_0267"/>
<dbReference type="KEGG" id="banh:HYU01_01500"/>
<dbReference type="KEGG" id="bar:GBAA_0267"/>
<dbReference type="KEGG" id="bat:BAS0253"/>
<dbReference type="PATRIC" id="fig|198094.11.peg.260"/>
<dbReference type="eggNOG" id="COG0459">
    <property type="taxonomic scope" value="Bacteria"/>
</dbReference>
<dbReference type="HOGENOM" id="CLU_016503_3_0_9"/>
<dbReference type="OMA" id="TDTDKME"/>
<dbReference type="OrthoDB" id="9766614at2"/>
<dbReference type="Proteomes" id="UP000000427">
    <property type="component" value="Chromosome"/>
</dbReference>
<dbReference type="Proteomes" id="UP000000594">
    <property type="component" value="Chromosome"/>
</dbReference>
<dbReference type="GO" id="GO:0005737">
    <property type="term" value="C:cytoplasm"/>
    <property type="evidence" value="ECO:0007669"/>
    <property type="project" value="UniProtKB-SubCell"/>
</dbReference>
<dbReference type="GO" id="GO:0005524">
    <property type="term" value="F:ATP binding"/>
    <property type="evidence" value="ECO:0007669"/>
    <property type="project" value="UniProtKB-UniRule"/>
</dbReference>
<dbReference type="GO" id="GO:0140662">
    <property type="term" value="F:ATP-dependent protein folding chaperone"/>
    <property type="evidence" value="ECO:0007669"/>
    <property type="project" value="InterPro"/>
</dbReference>
<dbReference type="GO" id="GO:0016853">
    <property type="term" value="F:isomerase activity"/>
    <property type="evidence" value="ECO:0007669"/>
    <property type="project" value="UniProtKB-KW"/>
</dbReference>
<dbReference type="GO" id="GO:0051082">
    <property type="term" value="F:unfolded protein binding"/>
    <property type="evidence" value="ECO:0007669"/>
    <property type="project" value="UniProtKB-UniRule"/>
</dbReference>
<dbReference type="GO" id="GO:0042026">
    <property type="term" value="P:protein refolding"/>
    <property type="evidence" value="ECO:0007669"/>
    <property type="project" value="UniProtKB-UniRule"/>
</dbReference>
<dbReference type="CDD" id="cd03344">
    <property type="entry name" value="GroEL"/>
    <property type="match status" value="1"/>
</dbReference>
<dbReference type="FunFam" id="1.10.560.10:FF:000001">
    <property type="entry name" value="60 kDa chaperonin"/>
    <property type="match status" value="1"/>
</dbReference>
<dbReference type="FunFam" id="3.50.7.10:FF:000001">
    <property type="entry name" value="60 kDa chaperonin"/>
    <property type="match status" value="1"/>
</dbReference>
<dbReference type="Gene3D" id="3.50.7.10">
    <property type="entry name" value="GroEL"/>
    <property type="match status" value="1"/>
</dbReference>
<dbReference type="Gene3D" id="1.10.560.10">
    <property type="entry name" value="GroEL-like equatorial domain"/>
    <property type="match status" value="1"/>
</dbReference>
<dbReference type="Gene3D" id="3.30.260.10">
    <property type="entry name" value="TCP-1-like chaperonin intermediate domain"/>
    <property type="match status" value="1"/>
</dbReference>
<dbReference type="HAMAP" id="MF_00600">
    <property type="entry name" value="CH60"/>
    <property type="match status" value="1"/>
</dbReference>
<dbReference type="InterPro" id="IPR018370">
    <property type="entry name" value="Chaperonin_Cpn60_CS"/>
</dbReference>
<dbReference type="InterPro" id="IPR001844">
    <property type="entry name" value="Cpn60/GroEL"/>
</dbReference>
<dbReference type="InterPro" id="IPR002423">
    <property type="entry name" value="Cpn60/GroEL/TCP-1"/>
</dbReference>
<dbReference type="InterPro" id="IPR027409">
    <property type="entry name" value="GroEL-like_apical_dom_sf"/>
</dbReference>
<dbReference type="InterPro" id="IPR027413">
    <property type="entry name" value="GROEL-like_equatorial_sf"/>
</dbReference>
<dbReference type="InterPro" id="IPR027410">
    <property type="entry name" value="TCP-1-like_intermed_sf"/>
</dbReference>
<dbReference type="NCBIfam" id="TIGR02348">
    <property type="entry name" value="GroEL"/>
    <property type="match status" value="1"/>
</dbReference>
<dbReference type="NCBIfam" id="NF000592">
    <property type="entry name" value="PRK00013.1"/>
    <property type="match status" value="1"/>
</dbReference>
<dbReference type="NCBIfam" id="NF009487">
    <property type="entry name" value="PRK12849.1"/>
    <property type="match status" value="1"/>
</dbReference>
<dbReference type="NCBIfam" id="NF009488">
    <property type="entry name" value="PRK12850.1"/>
    <property type="match status" value="1"/>
</dbReference>
<dbReference type="NCBIfam" id="NF009489">
    <property type="entry name" value="PRK12851.1"/>
    <property type="match status" value="1"/>
</dbReference>
<dbReference type="PANTHER" id="PTHR45633">
    <property type="entry name" value="60 KDA HEAT SHOCK PROTEIN, MITOCHONDRIAL"/>
    <property type="match status" value="1"/>
</dbReference>
<dbReference type="Pfam" id="PF00118">
    <property type="entry name" value="Cpn60_TCP1"/>
    <property type="match status" value="1"/>
</dbReference>
<dbReference type="PRINTS" id="PR00298">
    <property type="entry name" value="CHAPERONIN60"/>
</dbReference>
<dbReference type="SUPFAM" id="SSF52029">
    <property type="entry name" value="GroEL apical domain-like"/>
    <property type="match status" value="1"/>
</dbReference>
<dbReference type="SUPFAM" id="SSF48592">
    <property type="entry name" value="GroEL equatorial domain-like"/>
    <property type="match status" value="1"/>
</dbReference>
<dbReference type="SUPFAM" id="SSF54849">
    <property type="entry name" value="GroEL-intermediate domain like"/>
    <property type="match status" value="1"/>
</dbReference>
<dbReference type="PROSITE" id="PS00296">
    <property type="entry name" value="CHAPERONINS_CPN60"/>
    <property type="match status" value="1"/>
</dbReference>
<keyword id="KW-0067">ATP-binding</keyword>
<keyword id="KW-0143">Chaperone</keyword>
<keyword id="KW-0963">Cytoplasm</keyword>
<keyword id="KW-0413">Isomerase</keyword>
<keyword id="KW-0547">Nucleotide-binding</keyword>
<keyword id="KW-1185">Reference proteome</keyword>
<protein>
    <recommendedName>
        <fullName evidence="1">Chaperonin GroEL</fullName>
        <ecNumber evidence="1">5.6.1.7</ecNumber>
    </recommendedName>
    <alternativeName>
        <fullName evidence="1">60 kDa chaperonin</fullName>
    </alternativeName>
    <alternativeName>
        <fullName evidence="1">Chaperonin-60</fullName>
        <shortName evidence="1">Cpn60</shortName>
    </alternativeName>
</protein>
<sequence>MAKDIKFSEEARRSMLRGVDTLANAVKVTLGPKGRNVVLEKKFGSPLITNDGVTIAKEIELEDAFENMGAKLVAEVASKTNDVAGDGTTTATVLAQAMIREGLKNVTAGANPMGLRKGIEKAVVAAVEELKTISKPIEGKSSIAQVAAISAADEEVGQLIAEAMERVGNDGVITLEESKGFTTELDVVEGMQFDRGYASPYMITDSDKMEAVLDNPYILITDKKISNIQEILPVLEQVVQQGKPLLIIAEDVEGEALATLVVNKLRGTFNVVAVKAPGFGDRRKAMLEDIAILTGGEVITEELGRDLKSATVESLGRAGKVVVTKENTTVVEGVGSTEQIEARIGQIRAQLEETTSEFDREKLQERLAKLVGGVAVIKVGAATETELKERKLRIEDALNSTRAAVEEGIVAGGGTSLMNVYTKVASIVAEGDEATGINIVLRALEEPVRQIAINAGLEGSVVVERLKGEKVGVGFNAATGEWVNMLETGIVDPAKVTRSALQNAASVAAMFLTTEAVVADKPEPNAPAMPDMGGMGMGGMGGMM</sequence>
<organism>
    <name type="scientific">Bacillus anthracis</name>
    <dbReference type="NCBI Taxonomy" id="1392"/>
    <lineage>
        <taxon>Bacteria</taxon>
        <taxon>Bacillati</taxon>
        <taxon>Bacillota</taxon>
        <taxon>Bacilli</taxon>
        <taxon>Bacillales</taxon>
        <taxon>Bacillaceae</taxon>
        <taxon>Bacillus</taxon>
        <taxon>Bacillus cereus group</taxon>
    </lineage>
</organism>
<comment type="function">
    <text evidence="1">Together with its co-chaperonin GroES, plays an essential role in assisting protein folding. The GroEL-GroES system forms a nano-cage that allows encapsulation of the non-native substrate proteins and provides a physical environment optimized to promote and accelerate protein folding.</text>
</comment>
<comment type="catalytic activity">
    <reaction evidence="1">
        <text>ATP + H2O + a folded polypeptide = ADP + phosphate + an unfolded polypeptide.</text>
        <dbReference type="EC" id="5.6.1.7"/>
    </reaction>
</comment>
<comment type="subunit">
    <text evidence="1">Forms a cylinder of 14 subunits composed of two heptameric rings stacked back-to-back. Interacts with the co-chaperonin GroES.</text>
</comment>
<comment type="subcellular location">
    <subcellularLocation>
        <location evidence="1">Cytoplasm</location>
    </subcellularLocation>
</comment>
<comment type="similarity">
    <text evidence="1">Belongs to the chaperonin (HSP60) family.</text>
</comment>
<accession>Q81VE1</accession>
<accession>Q6I4E3</accession>
<accession>Q6KY46</accession>
<gene>
    <name evidence="1" type="primary">groEL</name>
    <name evidence="1" type="synonym">groL</name>
    <name type="ordered locus">BA_0267</name>
    <name type="ordered locus">GBAA_0267</name>
    <name type="ordered locus">BAS0253</name>
</gene>
<reference key="1">
    <citation type="journal article" date="2003" name="Nature">
        <title>The genome sequence of Bacillus anthracis Ames and comparison to closely related bacteria.</title>
        <authorList>
            <person name="Read T.D."/>
            <person name="Peterson S.N."/>
            <person name="Tourasse N.J."/>
            <person name="Baillie L.W."/>
            <person name="Paulsen I.T."/>
            <person name="Nelson K.E."/>
            <person name="Tettelin H."/>
            <person name="Fouts D.E."/>
            <person name="Eisen J.A."/>
            <person name="Gill S.R."/>
            <person name="Holtzapple E.K."/>
            <person name="Okstad O.A."/>
            <person name="Helgason E."/>
            <person name="Rilstone J."/>
            <person name="Wu M."/>
            <person name="Kolonay J.F."/>
            <person name="Beanan M.J."/>
            <person name="Dodson R.J."/>
            <person name="Brinkac L.M."/>
            <person name="Gwinn M.L."/>
            <person name="DeBoy R.T."/>
            <person name="Madpu R."/>
            <person name="Daugherty S.C."/>
            <person name="Durkin A.S."/>
            <person name="Haft D.H."/>
            <person name="Nelson W.C."/>
            <person name="Peterson J.D."/>
            <person name="Pop M."/>
            <person name="Khouri H.M."/>
            <person name="Radune D."/>
            <person name="Benton J.L."/>
            <person name="Mahamoud Y."/>
            <person name="Jiang L."/>
            <person name="Hance I.R."/>
            <person name="Weidman J.F."/>
            <person name="Berry K.J."/>
            <person name="Plaut R.D."/>
            <person name="Wolf A.M."/>
            <person name="Watkins K.L."/>
            <person name="Nierman W.C."/>
            <person name="Hazen A."/>
            <person name="Cline R.T."/>
            <person name="Redmond C."/>
            <person name="Thwaite J.E."/>
            <person name="White O."/>
            <person name="Salzberg S.L."/>
            <person name="Thomason B."/>
            <person name="Friedlander A.M."/>
            <person name="Koehler T.M."/>
            <person name="Hanna P.C."/>
            <person name="Kolstoe A.-B."/>
            <person name="Fraser C.M."/>
        </authorList>
    </citation>
    <scope>NUCLEOTIDE SEQUENCE [LARGE SCALE GENOMIC DNA]</scope>
    <source>
        <strain>Ames / isolate Porton</strain>
    </source>
</reference>
<reference key="2">
    <citation type="journal article" date="2009" name="J. Bacteriol.">
        <title>The complete genome sequence of Bacillus anthracis Ames 'Ancestor'.</title>
        <authorList>
            <person name="Ravel J."/>
            <person name="Jiang L."/>
            <person name="Stanley S.T."/>
            <person name="Wilson M.R."/>
            <person name="Decker R.S."/>
            <person name="Read T.D."/>
            <person name="Worsham P."/>
            <person name="Keim P.S."/>
            <person name="Salzberg S.L."/>
            <person name="Fraser-Liggett C.M."/>
            <person name="Rasko D.A."/>
        </authorList>
    </citation>
    <scope>NUCLEOTIDE SEQUENCE [LARGE SCALE GENOMIC DNA]</scope>
    <source>
        <strain>Ames ancestor</strain>
    </source>
</reference>
<reference key="3">
    <citation type="submission" date="2004-01" db="EMBL/GenBank/DDBJ databases">
        <title>Complete genome sequence of Bacillus anthracis Sterne.</title>
        <authorList>
            <person name="Brettin T.S."/>
            <person name="Bruce D."/>
            <person name="Challacombe J.F."/>
            <person name="Gilna P."/>
            <person name="Han C."/>
            <person name="Hill K."/>
            <person name="Hitchcock P."/>
            <person name="Jackson P."/>
            <person name="Keim P."/>
            <person name="Longmire J."/>
            <person name="Lucas S."/>
            <person name="Okinaka R."/>
            <person name="Richardson P."/>
            <person name="Rubin E."/>
            <person name="Tice H."/>
        </authorList>
    </citation>
    <scope>NUCLEOTIDE SEQUENCE [LARGE SCALE GENOMIC DNA]</scope>
    <source>
        <strain>Sterne</strain>
    </source>
</reference>
<evidence type="ECO:0000255" key="1">
    <source>
        <dbReference type="HAMAP-Rule" id="MF_00600"/>
    </source>
</evidence>
<feature type="chain" id="PRO_0000063267" description="Chaperonin GroEL">
    <location>
        <begin position="1"/>
        <end position="544"/>
    </location>
</feature>
<feature type="binding site" evidence="1">
    <location>
        <begin position="29"/>
        <end position="32"/>
    </location>
    <ligand>
        <name>ATP</name>
        <dbReference type="ChEBI" id="CHEBI:30616"/>
    </ligand>
</feature>
<feature type="binding site" evidence="1">
    <location>
        <begin position="86"/>
        <end position="90"/>
    </location>
    <ligand>
        <name>ATP</name>
        <dbReference type="ChEBI" id="CHEBI:30616"/>
    </ligand>
</feature>
<feature type="binding site" evidence="1">
    <location>
        <position position="413"/>
    </location>
    <ligand>
        <name>ATP</name>
        <dbReference type="ChEBI" id="CHEBI:30616"/>
    </ligand>
</feature>
<feature type="binding site" evidence="1">
    <location>
        <begin position="476"/>
        <end position="478"/>
    </location>
    <ligand>
        <name>ATP</name>
        <dbReference type="ChEBI" id="CHEBI:30616"/>
    </ligand>
</feature>
<feature type="binding site" evidence="1">
    <location>
        <position position="492"/>
    </location>
    <ligand>
        <name>ATP</name>
        <dbReference type="ChEBI" id="CHEBI:30616"/>
    </ligand>
</feature>
<proteinExistence type="inferred from homology"/>